<organism>
    <name type="scientific">Mus musculus</name>
    <name type="common">Mouse</name>
    <dbReference type="NCBI Taxonomy" id="10090"/>
    <lineage>
        <taxon>Eukaryota</taxon>
        <taxon>Metazoa</taxon>
        <taxon>Chordata</taxon>
        <taxon>Craniata</taxon>
        <taxon>Vertebrata</taxon>
        <taxon>Euteleostomi</taxon>
        <taxon>Mammalia</taxon>
        <taxon>Eutheria</taxon>
        <taxon>Euarchontoglires</taxon>
        <taxon>Glires</taxon>
        <taxon>Rodentia</taxon>
        <taxon>Myomorpha</taxon>
        <taxon>Muroidea</taxon>
        <taxon>Muridae</taxon>
        <taxon>Murinae</taxon>
        <taxon>Mus</taxon>
        <taxon>Mus</taxon>
    </lineage>
</organism>
<feature type="signal peptide" evidence="10">
    <location>
        <begin position="1"/>
        <end position="28"/>
    </location>
</feature>
<feature type="chain" id="PRO_0000007670" description="Nidogen-1">
    <location>
        <begin position="29"/>
        <end position="1245"/>
    </location>
</feature>
<feature type="domain" description="NIDO" evidence="6">
    <location>
        <begin position="106"/>
        <end position="268"/>
    </location>
</feature>
<feature type="domain" description="EGF-like 1" evidence="3">
    <location>
        <begin position="384"/>
        <end position="424"/>
    </location>
</feature>
<feature type="domain" description="Nidogen G2 beta-barrel" evidence="4">
    <location>
        <begin position="428"/>
        <end position="665"/>
    </location>
</feature>
<feature type="domain" description="EGF-like 2" evidence="3">
    <location>
        <begin position="666"/>
        <end position="707"/>
    </location>
</feature>
<feature type="domain" description="EGF-like 3; calcium-binding" evidence="3">
    <location>
        <begin position="708"/>
        <end position="749"/>
    </location>
</feature>
<feature type="domain" description="EGF-like 4" evidence="3">
    <location>
        <begin position="756"/>
        <end position="799"/>
    </location>
</feature>
<feature type="domain" description="EGF-like 5; calcium-binding" evidence="3">
    <location>
        <begin position="800"/>
        <end position="838"/>
    </location>
</feature>
<feature type="domain" description="Thyroglobulin type-1" evidence="5">
    <location>
        <begin position="844"/>
        <end position="917"/>
    </location>
</feature>
<feature type="repeat" description="LDL-receptor class B 1">
    <location>
        <begin position="988"/>
        <end position="1030"/>
    </location>
</feature>
<feature type="repeat" description="LDL-receptor class B 2">
    <location>
        <begin position="1031"/>
        <end position="1073"/>
    </location>
</feature>
<feature type="repeat" description="LDL-receptor class B 3">
    <location>
        <begin position="1074"/>
        <end position="1118"/>
    </location>
</feature>
<feature type="repeat" description="LDL-receptor class B 4">
    <location>
        <begin position="1119"/>
        <end position="1160"/>
    </location>
</feature>
<feature type="domain" description="EGF-like 6" evidence="3">
    <location>
        <begin position="1206"/>
        <end position="1242"/>
    </location>
</feature>
<feature type="region of interest" description="Disordered" evidence="7">
    <location>
        <begin position="307"/>
        <end position="344"/>
    </location>
</feature>
<feature type="short sequence motif" description="Cell attachment site">
    <location>
        <begin position="700"/>
        <end position="702"/>
    </location>
</feature>
<feature type="site" description="Involved in perlecan binding">
    <location>
        <position position="457"/>
    </location>
</feature>
<feature type="site" description="Involved in perlecan binding">
    <location>
        <position position="459"/>
    </location>
</feature>
<feature type="site" description="Involved in perlecan binding">
    <location>
        <position position="648"/>
    </location>
</feature>
<feature type="modified residue" description="Sulfotyrosine" evidence="2">
    <location>
        <position position="290"/>
    </location>
</feature>
<feature type="modified residue" description="Sulfotyrosine" evidence="2">
    <location>
        <position position="295"/>
    </location>
</feature>
<feature type="glycosylation site" description="N-linked (GlcNAc...) asparagine" evidence="12">
    <location>
        <position position="187"/>
    </location>
</feature>
<feature type="glycosylation site" description="O-linked (GalNAc...) threonine" evidence="12">
    <location>
        <position position="299"/>
    </location>
</feature>
<feature type="glycosylation site" description="O-linked (GalNAc...) serine" evidence="12">
    <location>
        <position position="331"/>
    </location>
</feature>
<feature type="glycosylation site" description="O-linked (GalNAc...) threonine" evidence="12">
    <location>
        <position position="337"/>
    </location>
</feature>
<feature type="glycosylation site" description="O-linked (GalNAc...) threonine" evidence="12">
    <location>
        <position position="345"/>
    </location>
</feature>
<feature type="glycosylation site" description="O-linked (GalNAc...) threonine; partial" evidence="12">
    <location>
        <position position="348"/>
    </location>
</feature>
<feature type="glycosylation site" description="N-linked (GlcNAc...) asparagine" evidence="12">
    <location>
        <position position="415"/>
    </location>
</feature>
<feature type="glycosylation site" description="O-linked (GalNAc...) threonine" evidence="12">
    <location>
        <position position="920"/>
    </location>
</feature>
<feature type="glycosylation site" description="O-linked (GalNAc...) threonine" evidence="12">
    <location>
        <position position="933"/>
    </location>
</feature>
<feature type="disulfide bond">
    <location>
        <begin position="388"/>
        <end position="401"/>
    </location>
</feature>
<feature type="disulfide bond">
    <location>
        <begin position="395"/>
        <end position="410"/>
    </location>
</feature>
<feature type="disulfide bond">
    <location>
        <begin position="409"/>
        <end position="616"/>
    </location>
</feature>
<feature type="disulfide bond">
    <location>
        <begin position="412"/>
        <end position="423"/>
    </location>
</feature>
<feature type="disulfide bond" evidence="1">
    <location>
        <begin position="670"/>
        <end position="683"/>
    </location>
</feature>
<feature type="disulfide bond" evidence="1">
    <location>
        <begin position="677"/>
        <end position="693"/>
    </location>
</feature>
<feature type="disulfide bond" evidence="1">
    <location>
        <begin position="695"/>
        <end position="706"/>
    </location>
</feature>
<feature type="disulfide bond" evidence="1">
    <location>
        <begin position="712"/>
        <end position="725"/>
    </location>
</feature>
<feature type="disulfide bond" evidence="1">
    <location>
        <begin position="719"/>
        <end position="734"/>
    </location>
</feature>
<feature type="disulfide bond" evidence="1">
    <location>
        <begin position="736"/>
        <end position="748"/>
    </location>
</feature>
<feature type="disulfide bond" evidence="1">
    <location>
        <begin position="760"/>
        <end position="775"/>
    </location>
</feature>
<feature type="disulfide bond" evidence="1">
    <location>
        <begin position="767"/>
        <end position="785"/>
    </location>
</feature>
<feature type="disulfide bond" evidence="1">
    <location>
        <begin position="787"/>
        <end position="798"/>
    </location>
</feature>
<feature type="disulfide bond" evidence="1">
    <location>
        <begin position="804"/>
        <end position="815"/>
    </location>
</feature>
<feature type="disulfide bond" evidence="1">
    <location>
        <begin position="809"/>
        <end position="824"/>
    </location>
</feature>
<feature type="disulfide bond" evidence="1">
    <location>
        <begin position="826"/>
        <end position="837"/>
    </location>
</feature>
<feature type="disulfide bond" evidence="1">
    <location>
        <begin position="847"/>
        <end position="876"/>
    </location>
</feature>
<feature type="disulfide bond" evidence="1">
    <location>
        <begin position="887"/>
        <end position="894"/>
    </location>
</feature>
<feature type="disulfide bond" evidence="1">
    <location>
        <begin position="896"/>
        <end position="917"/>
    </location>
</feature>
<feature type="disulfide bond" evidence="1">
    <location>
        <begin position="1210"/>
        <end position="1221"/>
    </location>
</feature>
<feature type="disulfide bond" evidence="1">
    <location>
        <begin position="1217"/>
        <end position="1230"/>
    </location>
</feature>
<feature type="disulfide bond" evidence="1">
    <location>
        <begin position="1232"/>
        <end position="1241"/>
    </location>
</feature>
<feature type="sequence conflict" description="In Ref. 2; CAA32642." evidence="15" ref="2">
    <original>P</original>
    <variation>L</variation>
    <location>
        <position position="170"/>
    </location>
</feature>
<feature type="sequence conflict" description="In Ref. 2; CAA32642." evidence="15" ref="2">
    <original>R</original>
    <variation>K</variation>
    <location>
        <position position="659"/>
    </location>
</feature>
<feature type="sequence conflict" description="In Ref. 1; CAA32408." evidence="15" ref="1">
    <original>A</original>
    <variation>R</variation>
    <location>
        <position position="967"/>
    </location>
</feature>
<feature type="helix" evidence="16">
    <location>
        <begin position="388"/>
        <end position="391"/>
    </location>
</feature>
<feature type="helix" evidence="16">
    <location>
        <begin position="392"/>
        <end position="394"/>
    </location>
</feature>
<feature type="strand" evidence="16">
    <location>
        <begin position="399"/>
        <end position="403"/>
    </location>
</feature>
<feature type="strand" evidence="16">
    <location>
        <begin position="408"/>
        <end position="412"/>
    </location>
</feature>
<feature type="strand" evidence="16">
    <location>
        <begin position="416"/>
        <end position="418"/>
    </location>
</feature>
<feature type="strand" evidence="16">
    <location>
        <begin position="420"/>
        <end position="425"/>
    </location>
</feature>
<feature type="strand" evidence="16">
    <location>
        <begin position="429"/>
        <end position="442"/>
    </location>
</feature>
<feature type="strand" evidence="16">
    <location>
        <begin position="449"/>
        <end position="461"/>
    </location>
</feature>
<feature type="turn" evidence="16">
    <location>
        <begin position="462"/>
        <end position="464"/>
    </location>
</feature>
<feature type="strand" evidence="16">
    <location>
        <begin position="466"/>
        <end position="473"/>
    </location>
</feature>
<feature type="helix" evidence="16">
    <location>
        <begin position="476"/>
        <end position="479"/>
    </location>
</feature>
<feature type="helix" evidence="16">
    <location>
        <begin position="480"/>
        <end position="482"/>
    </location>
</feature>
<feature type="helix" evidence="16">
    <location>
        <begin position="487"/>
        <end position="495"/>
    </location>
</feature>
<feature type="helix" evidence="16">
    <location>
        <begin position="506"/>
        <end position="510"/>
    </location>
</feature>
<feature type="strand" evidence="16">
    <location>
        <begin position="513"/>
        <end position="522"/>
    </location>
</feature>
<feature type="strand" evidence="16">
    <location>
        <begin position="525"/>
        <end position="527"/>
    </location>
</feature>
<feature type="strand" evidence="16">
    <location>
        <begin position="529"/>
        <end position="536"/>
    </location>
</feature>
<feature type="strand" evidence="16">
    <location>
        <begin position="547"/>
        <end position="554"/>
    </location>
</feature>
<feature type="strand" evidence="16">
    <location>
        <begin position="562"/>
        <end position="564"/>
    </location>
</feature>
<feature type="strand" evidence="16">
    <location>
        <begin position="568"/>
        <end position="575"/>
    </location>
</feature>
<feature type="strand" evidence="16">
    <location>
        <begin position="578"/>
        <end position="590"/>
    </location>
</feature>
<feature type="strand" evidence="16">
    <location>
        <begin position="601"/>
        <end position="612"/>
    </location>
</feature>
<feature type="strand" evidence="16">
    <location>
        <begin position="627"/>
        <end position="641"/>
    </location>
</feature>
<feature type="turn" evidence="16">
    <location>
        <begin position="642"/>
        <end position="645"/>
    </location>
</feature>
<feature type="strand" evidence="16">
    <location>
        <begin position="646"/>
        <end position="656"/>
    </location>
</feature>
<feature type="strand" evidence="17">
    <location>
        <begin position="942"/>
        <end position="960"/>
    </location>
</feature>
<feature type="helix" evidence="17">
    <location>
        <begin position="964"/>
        <end position="966"/>
    </location>
</feature>
<feature type="strand" evidence="17">
    <location>
        <begin position="968"/>
        <end position="984"/>
    </location>
</feature>
<feature type="turn" evidence="17">
    <location>
        <begin position="985"/>
        <end position="988"/>
    </location>
</feature>
<feature type="strand" evidence="17">
    <location>
        <begin position="989"/>
        <end position="994"/>
    </location>
</feature>
<feature type="turn" evidence="17">
    <location>
        <begin position="995"/>
        <end position="998"/>
    </location>
</feature>
<feature type="strand" evidence="17">
    <location>
        <begin position="999"/>
        <end position="1007"/>
    </location>
</feature>
<feature type="strand" evidence="17">
    <location>
        <begin position="1011"/>
        <end position="1014"/>
    </location>
</feature>
<feature type="strand" evidence="17">
    <location>
        <begin position="1021"/>
        <end position="1027"/>
    </location>
</feature>
<feature type="turn" evidence="17">
    <location>
        <begin position="1028"/>
        <end position="1031"/>
    </location>
</feature>
<feature type="strand" evidence="17">
    <location>
        <begin position="1032"/>
        <end position="1037"/>
    </location>
</feature>
<feature type="turn" evidence="17">
    <location>
        <begin position="1038"/>
        <end position="1041"/>
    </location>
</feature>
<feature type="strand" evidence="17">
    <location>
        <begin position="1042"/>
        <end position="1047"/>
    </location>
</feature>
<feature type="strand" evidence="17">
    <location>
        <begin position="1054"/>
        <end position="1057"/>
    </location>
</feature>
<feature type="strand" evidence="17">
    <location>
        <begin position="1062"/>
        <end position="1070"/>
    </location>
</feature>
<feature type="turn" evidence="17">
    <location>
        <begin position="1071"/>
        <end position="1074"/>
    </location>
</feature>
<feature type="strand" evidence="17">
    <location>
        <begin position="1075"/>
        <end position="1080"/>
    </location>
</feature>
<feature type="strand" evidence="17">
    <location>
        <begin position="1083"/>
        <end position="1085"/>
    </location>
</feature>
<feature type="strand" evidence="17">
    <location>
        <begin position="1087"/>
        <end position="1092"/>
    </location>
</feature>
<feature type="strand" evidence="17">
    <location>
        <begin position="1099"/>
        <end position="1102"/>
    </location>
</feature>
<feature type="strand" evidence="17">
    <location>
        <begin position="1109"/>
        <end position="1115"/>
    </location>
</feature>
<feature type="turn" evidence="17">
    <location>
        <begin position="1116"/>
        <end position="1119"/>
    </location>
</feature>
<feature type="strand" evidence="17">
    <location>
        <begin position="1120"/>
        <end position="1125"/>
    </location>
</feature>
<feature type="turn" evidence="17">
    <location>
        <begin position="1126"/>
        <end position="1129"/>
    </location>
</feature>
<feature type="strand" evidence="17">
    <location>
        <begin position="1130"/>
        <end position="1135"/>
    </location>
</feature>
<feature type="strand" evidence="17">
    <location>
        <begin position="1138"/>
        <end position="1146"/>
    </location>
</feature>
<feature type="strand" evidence="17">
    <location>
        <begin position="1150"/>
        <end position="1157"/>
    </location>
</feature>
<feature type="strand" evidence="17">
    <location>
        <begin position="1160"/>
        <end position="1165"/>
    </location>
</feature>
<feature type="turn" evidence="17">
    <location>
        <begin position="1166"/>
        <end position="1169"/>
    </location>
</feature>
<feature type="strand" evidence="17">
    <location>
        <begin position="1170"/>
        <end position="1175"/>
    </location>
</feature>
<feature type="turn" evidence="17">
    <location>
        <begin position="1176"/>
        <end position="1179"/>
    </location>
</feature>
<feature type="strand" evidence="17">
    <location>
        <begin position="1180"/>
        <end position="1185"/>
    </location>
</feature>
<feature type="strand" evidence="17">
    <location>
        <begin position="1196"/>
        <end position="1199"/>
    </location>
</feature>
<comment type="function">
    <text>Sulfated glycoprotein widely distributed in basement membranes and tightly associated with laminin. Also binds to collagen IV and perlecan. It probably has a role in cell-extracellular matrix interactions.</text>
</comment>
<comment type="subunit">
    <text evidence="8 9 11 13 14">Interacts with FBLN1 (PubMed:11589703, PubMed:9299350). Interacts with LGALS3BP (PubMed:9501082). Interacts with PLXDC1 (PubMed:16574105). Interacts with SVEP1 (PubMed:36792666).</text>
</comment>
<comment type="interaction">
    <interactant intactId="EBI-1032117">
        <id>P10493</id>
    </interactant>
    <interactant intactId="EBI-7059830">
        <id>P02468</id>
        <label>Lamc1</label>
    </interactant>
    <organismsDiffer>false</organismsDiffer>
    <experiments>5</experiments>
</comment>
<comment type="subcellular location">
    <subcellularLocation>
        <location>Secreted</location>
        <location>Extracellular space</location>
        <location>Extracellular matrix</location>
        <location>Basement membrane</location>
    </subcellularLocation>
</comment>
<comment type="PTM">
    <text evidence="12">N- and O-glycosylated.</text>
</comment>
<name>NID1_MOUSE</name>
<proteinExistence type="evidence at protein level"/>
<reference key="1">
    <citation type="journal article" date="1988" name="J. Cell Biol.">
        <title>Amino acid sequence and domain structure of entactin. Homology with epidermal growth factor precursor and low density lipoprotein receptor.</title>
        <authorList>
            <person name="Durkin M.E."/>
            <person name="Chakravarti S."/>
            <person name="Bartos B.B."/>
            <person name="Liu S.H."/>
            <person name="Friedman R.L."/>
            <person name="Chung A.E."/>
        </authorList>
    </citation>
    <scope>NUCLEOTIDE SEQUENCE [MRNA]</scope>
    <scope>PROTEIN SEQUENCE OF 29-40</scope>
</reference>
<reference key="2">
    <citation type="journal article" date="1989" name="EMBO J.">
        <title>Amino acid sequence of mouse nidogen, a multidomain basement membrane protein with binding activity for laminin, collagen IV and cells.</title>
        <authorList>
            <person name="Mann K."/>
            <person name="Deutzmann R."/>
            <person name="Aumailley M."/>
            <person name="Timpl R."/>
            <person name="Raimondi L."/>
            <person name="Yamamda Y."/>
            <person name="Pan T.-C."/>
            <person name="Conway D."/>
            <person name="Chu M.-L."/>
        </authorList>
    </citation>
    <scope>NUCLEOTIDE SEQUENCE [MRNA]</scope>
    <scope>PARTIAL PROTEIN SEQUENCE</scope>
</reference>
<reference key="3">
    <citation type="journal article" date="2005" name="Science">
        <title>The transcriptional landscape of the mammalian genome.</title>
        <authorList>
            <person name="Carninci P."/>
            <person name="Kasukawa T."/>
            <person name="Katayama S."/>
            <person name="Gough J."/>
            <person name="Frith M.C."/>
            <person name="Maeda N."/>
            <person name="Oyama R."/>
            <person name="Ravasi T."/>
            <person name="Lenhard B."/>
            <person name="Wells C."/>
            <person name="Kodzius R."/>
            <person name="Shimokawa K."/>
            <person name="Bajic V.B."/>
            <person name="Brenner S.E."/>
            <person name="Batalov S."/>
            <person name="Forrest A.R."/>
            <person name="Zavolan M."/>
            <person name="Davis M.J."/>
            <person name="Wilming L.G."/>
            <person name="Aidinis V."/>
            <person name="Allen J.E."/>
            <person name="Ambesi-Impiombato A."/>
            <person name="Apweiler R."/>
            <person name="Aturaliya R.N."/>
            <person name="Bailey T.L."/>
            <person name="Bansal M."/>
            <person name="Baxter L."/>
            <person name="Beisel K.W."/>
            <person name="Bersano T."/>
            <person name="Bono H."/>
            <person name="Chalk A.M."/>
            <person name="Chiu K.P."/>
            <person name="Choudhary V."/>
            <person name="Christoffels A."/>
            <person name="Clutterbuck D.R."/>
            <person name="Crowe M.L."/>
            <person name="Dalla E."/>
            <person name="Dalrymple B.P."/>
            <person name="de Bono B."/>
            <person name="Della Gatta G."/>
            <person name="di Bernardo D."/>
            <person name="Down T."/>
            <person name="Engstrom P."/>
            <person name="Fagiolini M."/>
            <person name="Faulkner G."/>
            <person name="Fletcher C.F."/>
            <person name="Fukushima T."/>
            <person name="Furuno M."/>
            <person name="Futaki S."/>
            <person name="Gariboldi M."/>
            <person name="Georgii-Hemming P."/>
            <person name="Gingeras T.R."/>
            <person name="Gojobori T."/>
            <person name="Green R.E."/>
            <person name="Gustincich S."/>
            <person name="Harbers M."/>
            <person name="Hayashi Y."/>
            <person name="Hensch T.K."/>
            <person name="Hirokawa N."/>
            <person name="Hill D."/>
            <person name="Huminiecki L."/>
            <person name="Iacono M."/>
            <person name="Ikeo K."/>
            <person name="Iwama A."/>
            <person name="Ishikawa T."/>
            <person name="Jakt M."/>
            <person name="Kanapin A."/>
            <person name="Katoh M."/>
            <person name="Kawasawa Y."/>
            <person name="Kelso J."/>
            <person name="Kitamura H."/>
            <person name="Kitano H."/>
            <person name="Kollias G."/>
            <person name="Krishnan S.P."/>
            <person name="Kruger A."/>
            <person name="Kummerfeld S.K."/>
            <person name="Kurochkin I.V."/>
            <person name="Lareau L.F."/>
            <person name="Lazarevic D."/>
            <person name="Lipovich L."/>
            <person name="Liu J."/>
            <person name="Liuni S."/>
            <person name="McWilliam S."/>
            <person name="Madan Babu M."/>
            <person name="Madera M."/>
            <person name="Marchionni L."/>
            <person name="Matsuda H."/>
            <person name="Matsuzawa S."/>
            <person name="Miki H."/>
            <person name="Mignone F."/>
            <person name="Miyake S."/>
            <person name="Morris K."/>
            <person name="Mottagui-Tabar S."/>
            <person name="Mulder N."/>
            <person name="Nakano N."/>
            <person name="Nakauchi H."/>
            <person name="Ng P."/>
            <person name="Nilsson R."/>
            <person name="Nishiguchi S."/>
            <person name="Nishikawa S."/>
            <person name="Nori F."/>
            <person name="Ohara O."/>
            <person name="Okazaki Y."/>
            <person name="Orlando V."/>
            <person name="Pang K.C."/>
            <person name="Pavan W.J."/>
            <person name="Pavesi G."/>
            <person name="Pesole G."/>
            <person name="Petrovsky N."/>
            <person name="Piazza S."/>
            <person name="Reed J."/>
            <person name="Reid J.F."/>
            <person name="Ring B.Z."/>
            <person name="Ringwald M."/>
            <person name="Rost B."/>
            <person name="Ruan Y."/>
            <person name="Salzberg S.L."/>
            <person name="Sandelin A."/>
            <person name="Schneider C."/>
            <person name="Schoenbach C."/>
            <person name="Sekiguchi K."/>
            <person name="Semple C.A."/>
            <person name="Seno S."/>
            <person name="Sessa L."/>
            <person name="Sheng Y."/>
            <person name="Shibata Y."/>
            <person name="Shimada H."/>
            <person name="Shimada K."/>
            <person name="Silva D."/>
            <person name="Sinclair B."/>
            <person name="Sperling S."/>
            <person name="Stupka E."/>
            <person name="Sugiura K."/>
            <person name="Sultana R."/>
            <person name="Takenaka Y."/>
            <person name="Taki K."/>
            <person name="Tammoja K."/>
            <person name="Tan S.L."/>
            <person name="Tang S."/>
            <person name="Taylor M.S."/>
            <person name="Tegner J."/>
            <person name="Teichmann S.A."/>
            <person name="Ueda H.R."/>
            <person name="van Nimwegen E."/>
            <person name="Verardo R."/>
            <person name="Wei C.L."/>
            <person name="Yagi K."/>
            <person name="Yamanishi H."/>
            <person name="Zabarovsky E."/>
            <person name="Zhu S."/>
            <person name="Zimmer A."/>
            <person name="Hide W."/>
            <person name="Bult C."/>
            <person name="Grimmond S.M."/>
            <person name="Teasdale R.D."/>
            <person name="Liu E.T."/>
            <person name="Brusic V."/>
            <person name="Quackenbush J."/>
            <person name="Wahlestedt C."/>
            <person name="Mattick J.S."/>
            <person name="Hume D.A."/>
            <person name="Kai C."/>
            <person name="Sasaki D."/>
            <person name="Tomaru Y."/>
            <person name="Fukuda S."/>
            <person name="Kanamori-Katayama M."/>
            <person name="Suzuki M."/>
            <person name="Aoki J."/>
            <person name="Arakawa T."/>
            <person name="Iida J."/>
            <person name="Imamura K."/>
            <person name="Itoh M."/>
            <person name="Kato T."/>
            <person name="Kawaji H."/>
            <person name="Kawagashira N."/>
            <person name="Kawashima T."/>
            <person name="Kojima M."/>
            <person name="Kondo S."/>
            <person name="Konno H."/>
            <person name="Nakano K."/>
            <person name="Ninomiya N."/>
            <person name="Nishio T."/>
            <person name="Okada M."/>
            <person name="Plessy C."/>
            <person name="Shibata K."/>
            <person name="Shiraki T."/>
            <person name="Suzuki S."/>
            <person name="Tagami M."/>
            <person name="Waki K."/>
            <person name="Watahiki A."/>
            <person name="Okamura-Oho Y."/>
            <person name="Suzuki H."/>
            <person name="Kawai J."/>
            <person name="Hayashizaki Y."/>
        </authorList>
    </citation>
    <scope>NUCLEOTIDE SEQUENCE [LARGE SCALE MRNA]</scope>
    <source>
        <strain>C57BL/6J</strain>
        <tissue>Embryonic lung</tissue>
        <tissue>Thymus</tissue>
    </source>
</reference>
<reference key="4">
    <citation type="journal article" date="2004" name="Genome Res.">
        <title>The status, quality, and expansion of the NIH full-length cDNA project: the Mammalian Gene Collection (MGC).</title>
        <authorList>
            <consortium name="The MGC Project Team"/>
        </authorList>
    </citation>
    <scope>NUCLEOTIDE SEQUENCE [LARGE SCALE MRNA]</scope>
</reference>
<reference key="5">
    <citation type="journal article" date="1993" name="Gene">
        <title>Characterization of the 5' end of the mouse Ent gene encoding the basement membrane protein, entactin.</title>
        <authorList>
            <person name="Durkin M.E."/>
            <person name="Liu S.H."/>
            <person name="Reing J."/>
            <person name="Chung A.E."/>
        </authorList>
    </citation>
    <scope>NUCLEOTIDE SEQUENCE [GENOMIC DNA] OF 1-251</scope>
    <source>
        <strain>BALB/cJ</strain>
        <tissue>Liver</tissue>
    </source>
</reference>
<reference key="6">
    <citation type="journal article" date="1995" name="Genomics">
        <title>Exon organization of the mouse entactin gene corresponds to the structural domains of the polypeptide and has regional homology to the low-density lipoprotein receptor gene.</title>
        <authorList>
            <person name="Durkin M.E."/>
            <person name="Wewer U.M."/>
            <person name="Chung A.E."/>
        </authorList>
    </citation>
    <scope>NUCLEOTIDE SEQUENCE [GENOMIC DNA] OF 1207-1245</scope>
    <source>
        <strain>C57BL/6J X CBA/J</strain>
    </source>
</reference>
<reference key="7">
    <citation type="journal article" date="1986" name="Eur. J. Biochem.">
        <title>Purification and structural characterization of intact and fragmented nidogen obtained from a tumor basement membrane.</title>
        <authorList>
            <person name="Paulsson M."/>
            <person name="Deutzmann R."/>
            <person name="Dziadek M."/>
            <person name="Nowack H."/>
            <person name="Timpl R."/>
            <person name="Weber S."/>
            <person name="Engel J."/>
        </authorList>
    </citation>
    <scope>PARTIAL PROTEIN SEQUENCE</scope>
</reference>
<reference key="8">
    <citation type="journal article" date="1993" name="Matrix">
        <title>Structure and localization of O- and N-linked oligosaccharide chains on basement membrane protein nidogen.</title>
        <authorList>
            <person name="Fujiwara S."/>
            <person name="Shinkai H."/>
            <person name="Mann K."/>
            <person name="Timpl R."/>
        </authorList>
    </citation>
    <scope>GLYCOSYLATION AT ASN-187; THR-299; SER-331; THR-337; THR-345; THR-348; ASN-415; THR-920 AND THR-933</scope>
    <scope>PARTIAL PROTEIN SEQUENCE</scope>
</reference>
<reference key="9">
    <citation type="journal article" date="1997" name="J. Mol. Biol.">
        <title>Binding of fibulin-1 to nidogen depends on its C-terminal globular domain and a specific array of calcium-binding epidermal growth factor-like (EG) modules.</title>
        <authorList>
            <person name="Adam S."/>
            <person name="Goehring W."/>
            <person name="Wiedemann H."/>
            <person name="Chu M.-L."/>
            <person name="Timpl R."/>
            <person name="Kostka G."/>
        </authorList>
    </citation>
    <scope>INTERACTION WITH FBLN1</scope>
</reference>
<reference key="10">
    <citation type="journal article" date="1998" name="EMBO J.">
        <title>Mac-2 binding protein is a cell-adhesive protein of the extracellular matrix which self-assembles into ring-like structures and binds beta1 integrins, collagens and fibronectin.</title>
        <authorList>
            <person name="Sasaki T."/>
            <person name="Brakebusch C."/>
            <person name="Engel J."/>
            <person name="Timpl R."/>
        </authorList>
    </citation>
    <scope>INTERACTION WITH LGALS3BP</scope>
</reference>
<reference key="11">
    <citation type="journal article" date="2001" name="Eur. J. Biochem.">
        <title>Recombinant domains of mouse nidogen-1 and their binding to basement membrane proteins and monoclonal antibodies.</title>
        <authorList>
            <person name="Ries A."/>
            <person name="Goehring W."/>
            <person name="Fox J.W."/>
            <person name="Timpl R."/>
            <person name="Sasaki T."/>
        </authorList>
    </citation>
    <scope>INTERACTION WITH FBLN1</scope>
</reference>
<reference key="12">
    <citation type="journal article" date="2006" name="FEBS Lett.">
        <title>Identification of the basement membrane protein nidogen as a candidate ligand for tumor endothelial marker 7 in vitro and in vivo.</title>
        <authorList>
            <person name="Lee H.K."/>
            <person name="Seo I.A."/>
            <person name="Park H.K."/>
            <person name="Park H.T."/>
        </authorList>
    </citation>
    <scope>INTERACTION WITH PLXDC1</scope>
</reference>
<reference key="13">
    <citation type="journal article" date="2010" name="Cell">
        <title>A tissue-specific atlas of mouse protein phosphorylation and expression.</title>
        <authorList>
            <person name="Huttlin E.L."/>
            <person name="Jedrychowski M.P."/>
            <person name="Elias J.E."/>
            <person name="Goswami T."/>
            <person name="Rad R."/>
            <person name="Beausoleil S.A."/>
            <person name="Villen J."/>
            <person name="Haas W."/>
            <person name="Sowa M.E."/>
            <person name="Gygi S.P."/>
        </authorList>
    </citation>
    <scope>IDENTIFICATION BY MASS SPECTROMETRY [LARGE SCALE ANALYSIS]</scope>
    <source>
        <tissue>Brown adipose tissue</tissue>
        <tissue>Heart</tissue>
        <tissue>Kidney</tissue>
        <tissue>Lung</tissue>
        <tissue>Pancreas</tissue>
        <tissue>Spleen</tissue>
        <tissue>Testis</tissue>
    </source>
</reference>
<reference key="14">
    <citation type="journal article" date="2023" name="Nat. Commun.">
        <title>SVEP1 is an endogenous ligand for the orphan receptor PEAR1.</title>
        <authorList>
            <person name="Elenbaas J.S."/>
            <person name="Pudupakkam U."/>
            <person name="Ashworth K.J."/>
            <person name="Kang C.J."/>
            <person name="Patel V."/>
            <person name="Santana K."/>
            <person name="Jung I.H."/>
            <person name="Lee P.C."/>
            <person name="Burks K.H."/>
            <person name="Amrute J.M."/>
            <person name="Mecham R.P."/>
            <person name="Halabi C.M."/>
            <person name="Alisio A."/>
            <person name="Di Paola J."/>
            <person name="Stitziel N.O."/>
        </authorList>
    </citation>
    <scope>INTERACTION WITH SVEP1</scope>
</reference>
<reference key="15">
    <citation type="journal article" date="2001" name="Nat. Struct. Biol.">
        <title>Crystal structure and mutational analysis of a perlecan-binding fragment of nidogen-1.</title>
        <authorList>
            <person name="Hopf M."/>
            <person name="Gohring W."/>
            <person name="Ries A."/>
            <person name="Timpl R."/>
            <person name="Hohenester E."/>
        </authorList>
    </citation>
    <scope>X-RAY CRYSTALLOGRAPHY (2.0 ANGSTROMS) OF 381-665</scope>
</reference>
<sequence>MLDASGCSWAMWTWALLQLLLLVGPGGCLNRQELFPFGPGQGDLELEAGDDVVSPSLELIGELSFYDRTDITSVYVTTNGIIAMSEPPATEYHPGTFPPSFGSVAPFLADLDTTDGLGNVYYREDLSPFIIQMAAEYVQRGFPEVSFQPTSVVVVTWESVAPYGGPSSSPAEEGKRNTFQAVLASSNSSSYAIFLYPEDGLQFFTTFSKKDESQVPAVVGFSKGLVGFLWKSNGAYNIFANDRESIENLAKSSNAGHQGVWVFEIGSPATAKGVVSADVNLDLDDDGADYEDEDYDLVTSHLGLEDVATPSPSHSPRRGYPDPHNVPRILSPGYEATERPRGVPTERTRSFQLPAERFPQHHPQVIDVDEVEETGVVFSYNTGSQQTCANNRHQCSVHAECRDYATGFCCRCVANYTGNGRQCVAEGSPQRVNGKVKGRIFVGSSQVPVVFENTDLHSYVVMNHGRSYTAISTIPETVGYSLLPLAPIGGIIGWMFAVEQDGFKNGFSITGGEFTRQAEVTFLGHPGKLVLKQQFSGIDEHGHLTISTELEGRVPQIPYGASVHIEPYTELYHYSSSVITSSSTREYTVMEPDQDGAAPSHTHIYQWRQTITFQECAHDDARPALPSTQQLSVDSVFVLYNKEERILRYALSNSIGPVRDGSPDALQNPCYIGTHGCDSNAACRPGPGTQFTCECSIGFRGDGQTCYDIDECSEQPSRCGNHAVCNNLPGTFRCECVEGYHFSDRGTCVAAEDQRPINYCETGLHNCDIPQRAQCIYMGGSSYTCSCLPGFSGDGRACRDVDECQHSRCHPDAFCYNTPGSFTCQCKPGYQGDGFRCMPGEVSKTRCQLEREHILGAAGGADAQRPTLQGMFVPQCDEYGHYVPTQCHHSTGYCWCVDRDGRELEGSRTPPGMRPPCLSTVAPPIHQGPVVPTAVIPLPPGTHLLFAQTGKIERLPLERNTMKKTEAKAFLHIPAKVIIGLAFDCVDKVVYWTDISEPSIGRASLHGGEPTTIIRQDLGSPEGIALDHLGRTIFWTDSQLDRIEVAKMDGTQRRVLFDTGLVNPRGIVTDPVRGNLYWTDWNRDNPKIETSHMDGTNRRILAQDNLGLPNGLTFDAFSSQLCWVDAGTHRAECLNPAQPGRRKVLEGLQYPFAVTSYGKNLYYTDWKTNSVIAMDLAISKEMDTFHPHKQTRLYGITIALSQCPQGHNYCSVNNGGCTHLCLPTPGSRTCRCPDNTLGVDCIERK</sequence>
<protein>
    <recommendedName>
        <fullName>Nidogen-1</fullName>
        <shortName>NID-1</shortName>
    </recommendedName>
    <alternativeName>
        <fullName>Entactin</fullName>
    </alternativeName>
</protein>
<accession>P10493</accession>
<accession>Q3TKX9</accession>
<accession>Q8BQI3</accession>
<accession>Q8C3U8</accession>
<accession>Q8C9P6</accession>
<dbReference type="EMBL" id="X14194">
    <property type="protein sequence ID" value="CAA32408.1"/>
    <property type="molecule type" value="mRNA"/>
</dbReference>
<dbReference type="EMBL" id="X14480">
    <property type="protein sequence ID" value="CAA32642.1"/>
    <property type="molecule type" value="mRNA"/>
</dbReference>
<dbReference type="EMBL" id="AK041633">
    <property type="protein sequence ID" value="BAC31014.1"/>
    <property type="molecule type" value="mRNA"/>
</dbReference>
<dbReference type="EMBL" id="AK084876">
    <property type="protein sequence ID" value="BAC39300.1"/>
    <property type="molecule type" value="mRNA"/>
</dbReference>
<dbReference type="EMBL" id="AK144878">
    <property type="protein sequence ID" value="BAE26114.1"/>
    <property type="molecule type" value="mRNA"/>
</dbReference>
<dbReference type="EMBL" id="AK166779">
    <property type="protein sequence ID" value="BAE39014.1"/>
    <property type="molecule type" value="mRNA"/>
</dbReference>
<dbReference type="EMBL" id="BC131669">
    <property type="protein sequence ID" value="AAI31670.1"/>
    <property type="molecule type" value="mRNA"/>
</dbReference>
<dbReference type="EMBL" id="AH003206">
    <property type="protein sequence ID" value="AAA77652.1"/>
    <property type="molecule type" value="Genomic_DNA"/>
</dbReference>
<dbReference type="EMBL" id="X83093">
    <property type="protein sequence ID" value="CAA58148.1"/>
    <property type="molecule type" value="Genomic_DNA"/>
</dbReference>
<dbReference type="CCDS" id="CCDS26244.1"/>
<dbReference type="PIR" id="S02730">
    <property type="entry name" value="MMMSND"/>
</dbReference>
<dbReference type="RefSeq" id="NP_035047.2">
    <property type="nucleotide sequence ID" value="NM_010917.3"/>
</dbReference>
<dbReference type="PDB" id="1GL4">
    <property type="method" value="X-ray"/>
    <property type="resolution" value="2.00 A"/>
    <property type="chains" value="A=385-665"/>
</dbReference>
<dbReference type="PDB" id="1H4U">
    <property type="method" value="X-ray"/>
    <property type="resolution" value="2.20 A"/>
    <property type="chains" value="A=395-659"/>
</dbReference>
<dbReference type="PDB" id="1NPE">
    <property type="method" value="X-ray"/>
    <property type="resolution" value="2.30 A"/>
    <property type="chains" value="A=941-1207"/>
</dbReference>
<dbReference type="PDBsum" id="1GL4"/>
<dbReference type="PDBsum" id="1H4U"/>
<dbReference type="PDBsum" id="1NPE"/>
<dbReference type="SMR" id="P10493"/>
<dbReference type="BioGRID" id="201770">
    <property type="interactions" value="15"/>
</dbReference>
<dbReference type="ComplexPortal" id="CPX-1281">
    <property type="entry name" value="Laminin111-nidogen complex"/>
</dbReference>
<dbReference type="ComplexPortal" id="CPX-1284">
    <property type="entry name" value="Laminin211-nidogen complex"/>
</dbReference>
<dbReference type="ComplexPortal" id="CPX-1286">
    <property type="entry name" value="Laminin221-nidogen complex"/>
</dbReference>
<dbReference type="FunCoup" id="P10493">
    <property type="interactions" value="310"/>
</dbReference>
<dbReference type="IntAct" id="P10493">
    <property type="interactions" value="7"/>
</dbReference>
<dbReference type="MINT" id="P10493"/>
<dbReference type="STRING" id="10090.ENSMUSP00000005532"/>
<dbReference type="GlyCosmos" id="P10493">
    <property type="glycosylation" value="9 sites, No reported glycans"/>
</dbReference>
<dbReference type="GlyGen" id="P10493">
    <property type="glycosylation" value="11 sites, 1 N-linked glycan (1 site), 1 O-linked glycan (1 site)"/>
</dbReference>
<dbReference type="iPTMnet" id="P10493"/>
<dbReference type="MetOSite" id="P10493"/>
<dbReference type="PhosphoSitePlus" id="P10493"/>
<dbReference type="SwissPalm" id="P10493"/>
<dbReference type="CPTAC" id="non-CPTAC-3848"/>
<dbReference type="jPOST" id="P10493"/>
<dbReference type="PaxDb" id="10090-ENSMUSP00000005532"/>
<dbReference type="PeptideAtlas" id="P10493"/>
<dbReference type="ProteomicsDB" id="252964"/>
<dbReference type="Pumba" id="P10493"/>
<dbReference type="Antibodypedia" id="4102">
    <property type="antibodies" value="451 antibodies from 38 providers"/>
</dbReference>
<dbReference type="DNASU" id="18073"/>
<dbReference type="Ensembl" id="ENSMUST00000005532.9">
    <property type="protein sequence ID" value="ENSMUSP00000005532.8"/>
    <property type="gene ID" value="ENSMUSG00000005397.9"/>
</dbReference>
<dbReference type="GeneID" id="18073"/>
<dbReference type="KEGG" id="mmu:18073"/>
<dbReference type="UCSC" id="uc007pmf.2">
    <property type="organism name" value="mouse"/>
</dbReference>
<dbReference type="AGR" id="MGI:97342"/>
<dbReference type="CTD" id="4811"/>
<dbReference type="MGI" id="MGI:97342">
    <property type="gene designation" value="Nid1"/>
</dbReference>
<dbReference type="VEuPathDB" id="HostDB:ENSMUSG00000005397"/>
<dbReference type="eggNOG" id="KOG1214">
    <property type="taxonomic scope" value="Eukaryota"/>
</dbReference>
<dbReference type="GeneTree" id="ENSGT00940000156318"/>
<dbReference type="HOGENOM" id="CLU_003163_1_0_1"/>
<dbReference type="InParanoid" id="P10493"/>
<dbReference type="OMA" id="PGTGNQF"/>
<dbReference type="OrthoDB" id="6304at9989"/>
<dbReference type="PhylomeDB" id="P10493"/>
<dbReference type="TreeFam" id="TF320666"/>
<dbReference type="Reactome" id="R-MMU-1474228">
    <property type="pathway name" value="Degradation of the extracellular matrix"/>
</dbReference>
<dbReference type="Reactome" id="R-MMU-3000157">
    <property type="pathway name" value="Laminin interactions"/>
</dbReference>
<dbReference type="BioGRID-ORCS" id="18073">
    <property type="hits" value="3 hits in 82 CRISPR screens"/>
</dbReference>
<dbReference type="ChiTaRS" id="Nid1">
    <property type="organism name" value="mouse"/>
</dbReference>
<dbReference type="EvolutionaryTrace" id="P10493"/>
<dbReference type="PRO" id="PR:P10493"/>
<dbReference type="Proteomes" id="UP000000589">
    <property type="component" value="Chromosome 13"/>
</dbReference>
<dbReference type="RNAct" id="P10493">
    <property type="molecule type" value="protein"/>
</dbReference>
<dbReference type="Bgee" id="ENSMUSG00000005397">
    <property type="expression patterns" value="Expressed in endothelial cell of lymphatic vessel and 277 other cell types or tissues"/>
</dbReference>
<dbReference type="GO" id="GO:0005604">
    <property type="term" value="C:basement membrane"/>
    <property type="evidence" value="ECO:0000314"/>
    <property type="project" value="MGI"/>
</dbReference>
<dbReference type="GO" id="GO:0071944">
    <property type="term" value="C:cell periphery"/>
    <property type="evidence" value="ECO:0000314"/>
    <property type="project" value="MGI"/>
</dbReference>
<dbReference type="GO" id="GO:0062023">
    <property type="term" value="C:collagen-containing extracellular matrix"/>
    <property type="evidence" value="ECO:0007005"/>
    <property type="project" value="UniProtKB"/>
</dbReference>
<dbReference type="GO" id="GO:0031012">
    <property type="term" value="C:extracellular matrix"/>
    <property type="evidence" value="ECO:0000314"/>
    <property type="project" value="MGI"/>
</dbReference>
<dbReference type="GO" id="GO:0005576">
    <property type="term" value="C:extracellular region"/>
    <property type="evidence" value="ECO:0000304"/>
    <property type="project" value="Reactome"/>
</dbReference>
<dbReference type="GO" id="GO:0098637">
    <property type="term" value="C:protein complex involved in cell-matrix adhesion"/>
    <property type="evidence" value="ECO:0000303"/>
    <property type="project" value="ComplexPortal"/>
</dbReference>
<dbReference type="GO" id="GO:0005509">
    <property type="term" value="F:calcium ion binding"/>
    <property type="evidence" value="ECO:0007669"/>
    <property type="project" value="InterPro"/>
</dbReference>
<dbReference type="GO" id="GO:0005518">
    <property type="term" value="F:collagen binding"/>
    <property type="evidence" value="ECO:0000314"/>
    <property type="project" value="MGI"/>
</dbReference>
<dbReference type="GO" id="GO:0050840">
    <property type="term" value="F:extracellular matrix binding"/>
    <property type="evidence" value="ECO:0000314"/>
    <property type="project" value="MGI"/>
</dbReference>
<dbReference type="GO" id="GO:0043237">
    <property type="term" value="F:laminin-1 binding"/>
    <property type="evidence" value="ECO:0000314"/>
    <property type="project" value="MGI"/>
</dbReference>
<dbReference type="GO" id="GO:0043394">
    <property type="term" value="F:proteoglycan binding"/>
    <property type="evidence" value="ECO:0007669"/>
    <property type="project" value="Ensembl"/>
</dbReference>
<dbReference type="GO" id="GO:0007160">
    <property type="term" value="P:cell-matrix adhesion"/>
    <property type="evidence" value="ECO:0000314"/>
    <property type="project" value="MGI"/>
</dbReference>
<dbReference type="GO" id="GO:0030198">
    <property type="term" value="P:extracellular matrix organization"/>
    <property type="evidence" value="ECO:0000314"/>
    <property type="project" value="MGI"/>
</dbReference>
<dbReference type="GO" id="GO:0032836">
    <property type="term" value="P:glomerular basement membrane development"/>
    <property type="evidence" value="ECO:0000315"/>
    <property type="project" value="MGI"/>
</dbReference>
<dbReference type="GO" id="GO:0045785">
    <property type="term" value="P:positive regulation of cell adhesion"/>
    <property type="evidence" value="ECO:0000303"/>
    <property type="project" value="ComplexPortal"/>
</dbReference>
<dbReference type="GO" id="GO:0010811">
    <property type="term" value="P:positive regulation of cell-substrate adhesion"/>
    <property type="evidence" value="ECO:0000314"/>
    <property type="project" value="MGI"/>
</dbReference>
<dbReference type="GO" id="GO:2001046">
    <property type="term" value="P:positive regulation of integrin-mediated signaling pathway"/>
    <property type="evidence" value="ECO:0000303"/>
    <property type="project" value="ComplexPortal"/>
</dbReference>
<dbReference type="GO" id="GO:0051149">
    <property type="term" value="P:positive regulation of muscle cell differentiation"/>
    <property type="evidence" value="ECO:0000303"/>
    <property type="project" value="ComplexPortal"/>
</dbReference>
<dbReference type="GO" id="GO:0110011">
    <property type="term" value="P:regulation of basement membrane organization"/>
    <property type="evidence" value="ECO:0000303"/>
    <property type="project" value="ComplexPortal"/>
</dbReference>
<dbReference type="CDD" id="cd00054">
    <property type="entry name" value="EGF_CA"/>
    <property type="match status" value="2"/>
</dbReference>
<dbReference type="CDD" id="cd00255">
    <property type="entry name" value="nidG2"/>
    <property type="match status" value="1"/>
</dbReference>
<dbReference type="CDD" id="cd00191">
    <property type="entry name" value="TY"/>
    <property type="match status" value="1"/>
</dbReference>
<dbReference type="FunFam" id="2.10.25.10:FF:000270">
    <property type="entry name" value="Nidogen 1"/>
    <property type="match status" value="1"/>
</dbReference>
<dbReference type="FunFam" id="2.10.25.10:FF:000281">
    <property type="entry name" value="Nidogen 1"/>
    <property type="match status" value="1"/>
</dbReference>
<dbReference type="FunFam" id="2.10.25.10:FF:000297">
    <property type="entry name" value="Nidogen 1"/>
    <property type="match status" value="1"/>
</dbReference>
<dbReference type="FunFam" id="2.120.10.30:FF:000030">
    <property type="entry name" value="Nidogen 1"/>
    <property type="match status" value="1"/>
</dbReference>
<dbReference type="FunFam" id="2.40.155.10:FF:000001">
    <property type="entry name" value="Nidogen 1"/>
    <property type="match status" value="1"/>
</dbReference>
<dbReference type="FunFam" id="2.10.25.10:FF:000666">
    <property type="entry name" value="nidogen-1"/>
    <property type="match status" value="1"/>
</dbReference>
<dbReference type="FunFam" id="4.10.800.10:FF:000001">
    <property type="entry name" value="Testican-3 isoform 2"/>
    <property type="match status" value="1"/>
</dbReference>
<dbReference type="Gene3D" id="2.40.155.10">
    <property type="entry name" value="Green fluorescent protein"/>
    <property type="match status" value="1"/>
</dbReference>
<dbReference type="Gene3D" id="2.10.25.10">
    <property type="entry name" value="Laminin"/>
    <property type="match status" value="5"/>
</dbReference>
<dbReference type="Gene3D" id="4.10.800.10">
    <property type="entry name" value="Thyroglobulin type-1"/>
    <property type="match status" value="1"/>
</dbReference>
<dbReference type="Gene3D" id="2.120.10.30">
    <property type="entry name" value="TolB, C-terminal domain"/>
    <property type="match status" value="1"/>
</dbReference>
<dbReference type="InterPro" id="IPR011042">
    <property type="entry name" value="6-blade_b-propeller_TolB-like"/>
</dbReference>
<dbReference type="InterPro" id="IPR026823">
    <property type="entry name" value="cEGF"/>
</dbReference>
<dbReference type="InterPro" id="IPR050778">
    <property type="entry name" value="Cueball_EGF_LRP_Nidogen"/>
</dbReference>
<dbReference type="InterPro" id="IPR001881">
    <property type="entry name" value="EGF-like_Ca-bd_dom"/>
</dbReference>
<dbReference type="InterPro" id="IPR000742">
    <property type="entry name" value="EGF-like_dom"/>
</dbReference>
<dbReference type="InterPro" id="IPR000152">
    <property type="entry name" value="EGF-type_Asp/Asn_hydroxyl_site"/>
</dbReference>
<dbReference type="InterPro" id="IPR018097">
    <property type="entry name" value="EGF_Ca-bd_CS"/>
</dbReference>
<dbReference type="InterPro" id="IPR024731">
    <property type="entry name" value="EGF_dom"/>
</dbReference>
<dbReference type="InterPro" id="IPR006605">
    <property type="entry name" value="G2_nidogen/fibulin_G2F"/>
</dbReference>
<dbReference type="InterPro" id="IPR009017">
    <property type="entry name" value="GFP"/>
</dbReference>
<dbReference type="InterPro" id="IPR009030">
    <property type="entry name" value="Growth_fac_rcpt_cys_sf"/>
</dbReference>
<dbReference type="InterPro" id="IPR000033">
    <property type="entry name" value="LDLR_classB_rpt"/>
</dbReference>
<dbReference type="InterPro" id="IPR003886">
    <property type="entry name" value="NIDO_dom"/>
</dbReference>
<dbReference type="InterPro" id="IPR049883">
    <property type="entry name" value="NOTCH1_EGF-like"/>
</dbReference>
<dbReference type="InterPro" id="IPR000716">
    <property type="entry name" value="Thyroglobulin_1"/>
</dbReference>
<dbReference type="InterPro" id="IPR036857">
    <property type="entry name" value="Thyroglobulin_1_sf"/>
</dbReference>
<dbReference type="PANTHER" id="PTHR46513:SF6">
    <property type="entry name" value="NIDOGEN-1"/>
    <property type="match status" value="1"/>
</dbReference>
<dbReference type="PANTHER" id="PTHR46513">
    <property type="entry name" value="VITELLOGENIN RECEPTOR-LIKE PROTEIN-RELATED-RELATED"/>
    <property type="match status" value="1"/>
</dbReference>
<dbReference type="Pfam" id="PF12662">
    <property type="entry name" value="cEGF"/>
    <property type="match status" value="1"/>
</dbReference>
<dbReference type="Pfam" id="PF12947">
    <property type="entry name" value="EGF_3"/>
    <property type="match status" value="2"/>
</dbReference>
<dbReference type="Pfam" id="PF07645">
    <property type="entry name" value="EGF_CA"/>
    <property type="match status" value="1"/>
</dbReference>
<dbReference type="Pfam" id="PF14670">
    <property type="entry name" value="FXa_inhibition"/>
    <property type="match status" value="1"/>
</dbReference>
<dbReference type="Pfam" id="PF07474">
    <property type="entry name" value="G2F"/>
    <property type="match status" value="1"/>
</dbReference>
<dbReference type="Pfam" id="PF00058">
    <property type="entry name" value="Ldl_recept_b"/>
    <property type="match status" value="3"/>
</dbReference>
<dbReference type="Pfam" id="PF06119">
    <property type="entry name" value="NIDO"/>
    <property type="match status" value="1"/>
</dbReference>
<dbReference type="Pfam" id="PF00086">
    <property type="entry name" value="Thyroglobulin_1"/>
    <property type="match status" value="1"/>
</dbReference>
<dbReference type="SMART" id="SM00181">
    <property type="entry name" value="EGF"/>
    <property type="match status" value="6"/>
</dbReference>
<dbReference type="SMART" id="SM00179">
    <property type="entry name" value="EGF_CA"/>
    <property type="match status" value="4"/>
</dbReference>
<dbReference type="SMART" id="SM00682">
    <property type="entry name" value="G2F"/>
    <property type="match status" value="1"/>
</dbReference>
<dbReference type="SMART" id="SM00135">
    <property type="entry name" value="LY"/>
    <property type="match status" value="5"/>
</dbReference>
<dbReference type="SMART" id="SM00539">
    <property type="entry name" value="NIDO"/>
    <property type="match status" value="1"/>
</dbReference>
<dbReference type="SMART" id="SM00211">
    <property type="entry name" value="TY"/>
    <property type="match status" value="1"/>
</dbReference>
<dbReference type="SUPFAM" id="SSF57196">
    <property type="entry name" value="EGF/Laminin"/>
    <property type="match status" value="1"/>
</dbReference>
<dbReference type="SUPFAM" id="SSF54511">
    <property type="entry name" value="GFP-like"/>
    <property type="match status" value="1"/>
</dbReference>
<dbReference type="SUPFAM" id="SSF57184">
    <property type="entry name" value="Growth factor receptor domain"/>
    <property type="match status" value="1"/>
</dbReference>
<dbReference type="SUPFAM" id="SSF57610">
    <property type="entry name" value="Thyroglobulin type-1 domain"/>
    <property type="match status" value="1"/>
</dbReference>
<dbReference type="SUPFAM" id="SSF63825">
    <property type="entry name" value="YWTD domain"/>
    <property type="match status" value="1"/>
</dbReference>
<dbReference type="PROSITE" id="PS00010">
    <property type="entry name" value="ASX_HYDROXYL"/>
    <property type="match status" value="3"/>
</dbReference>
<dbReference type="PROSITE" id="PS00022">
    <property type="entry name" value="EGF_1"/>
    <property type="match status" value="1"/>
</dbReference>
<dbReference type="PROSITE" id="PS01186">
    <property type="entry name" value="EGF_2"/>
    <property type="match status" value="4"/>
</dbReference>
<dbReference type="PROSITE" id="PS50026">
    <property type="entry name" value="EGF_3"/>
    <property type="match status" value="5"/>
</dbReference>
<dbReference type="PROSITE" id="PS01187">
    <property type="entry name" value="EGF_CA"/>
    <property type="match status" value="2"/>
</dbReference>
<dbReference type="PROSITE" id="PS51120">
    <property type="entry name" value="LDLRB"/>
    <property type="match status" value="4"/>
</dbReference>
<dbReference type="PROSITE" id="PS51220">
    <property type="entry name" value="NIDO"/>
    <property type="match status" value="1"/>
</dbReference>
<dbReference type="PROSITE" id="PS50993">
    <property type="entry name" value="NIDOGEN_G2"/>
    <property type="match status" value="1"/>
</dbReference>
<dbReference type="PROSITE" id="PS00484">
    <property type="entry name" value="THYROGLOBULIN_1_1"/>
    <property type="match status" value="1"/>
</dbReference>
<dbReference type="PROSITE" id="PS51162">
    <property type="entry name" value="THYROGLOBULIN_1_2"/>
    <property type="match status" value="1"/>
</dbReference>
<gene>
    <name type="primary">Nid1</name>
    <name type="synonym">Ent</name>
</gene>
<keyword id="KW-0002">3D-structure</keyword>
<keyword id="KW-0084">Basement membrane</keyword>
<keyword id="KW-0106">Calcium</keyword>
<keyword id="KW-0130">Cell adhesion</keyword>
<keyword id="KW-0903">Direct protein sequencing</keyword>
<keyword id="KW-1015">Disulfide bond</keyword>
<keyword id="KW-0245">EGF-like domain</keyword>
<keyword id="KW-0272">Extracellular matrix</keyword>
<keyword id="KW-0325">Glycoprotein</keyword>
<keyword id="KW-1185">Reference proteome</keyword>
<keyword id="KW-0677">Repeat</keyword>
<keyword id="KW-0964">Secreted</keyword>
<keyword id="KW-0732">Signal</keyword>
<keyword id="KW-0765">Sulfation</keyword>
<evidence type="ECO:0000250" key="1"/>
<evidence type="ECO:0000255" key="2"/>
<evidence type="ECO:0000255" key="3">
    <source>
        <dbReference type="PROSITE-ProRule" id="PRU00076"/>
    </source>
</evidence>
<evidence type="ECO:0000255" key="4">
    <source>
        <dbReference type="PROSITE-ProRule" id="PRU00348"/>
    </source>
</evidence>
<evidence type="ECO:0000255" key="5">
    <source>
        <dbReference type="PROSITE-ProRule" id="PRU00500"/>
    </source>
</evidence>
<evidence type="ECO:0000255" key="6">
    <source>
        <dbReference type="PROSITE-ProRule" id="PRU00570"/>
    </source>
</evidence>
<evidence type="ECO:0000256" key="7">
    <source>
        <dbReference type="SAM" id="MobiDB-lite"/>
    </source>
</evidence>
<evidence type="ECO:0000269" key="8">
    <source>
    </source>
</evidence>
<evidence type="ECO:0000269" key="9">
    <source>
    </source>
</evidence>
<evidence type="ECO:0000269" key="10">
    <source>
    </source>
</evidence>
<evidence type="ECO:0000269" key="11">
    <source>
    </source>
</evidence>
<evidence type="ECO:0000269" key="12">
    <source>
    </source>
</evidence>
<evidence type="ECO:0000269" key="13">
    <source>
    </source>
</evidence>
<evidence type="ECO:0000269" key="14">
    <source>
    </source>
</evidence>
<evidence type="ECO:0000305" key="15"/>
<evidence type="ECO:0007829" key="16">
    <source>
        <dbReference type="PDB" id="1GL4"/>
    </source>
</evidence>
<evidence type="ECO:0007829" key="17">
    <source>
        <dbReference type="PDB" id="1NPE"/>
    </source>
</evidence>